<feature type="chain" id="PRO_0000331037" description="SsrA-binding protein">
    <location>
        <begin position="1"/>
        <end position="153"/>
    </location>
</feature>
<protein>
    <recommendedName>
        <fullName evidence="1">SsrA-binding protein</fullName>
    </recommendedName>
    <alternativeName>
        <fullName evidence="1">Small protein B</fullName>
    </alternativeName>
</protein>
<evidence type="ECO:0000255" key="1">
    <source>
        <dbReference type="HAMAP-Rule" id="MF_00023"/>
    </source>
</evidence>
<organism>
    <name type="scientific">Cytophaga hutchinsonii (strain ATCC 33406 / DSM 1761 / CIP 103989 / NBRC 15051 / NCIMB 9469 / D465)</name>
    <dbReference type="NCBI Taxonomy" id="269798"/>
    <lineage>
        <taxon>Bacteria</taxon>
        <taxon>Pseudomonadati</taxon>
        <taxon>Bacteroidota</taxon>
        <taxon>Cytophagia</taxon>
        <taxon>Cytophagales</taxon>
        <taxon>Cytophagaceae</taxon>
        <taxon>Cytophaga</taxon>
    </lineage>
</organism>
<sequence length="153" mass="17904">MSTKEIVKNVNIKNKKASFEYEFLEKYEAGIVLKGTEIKAIRMSKASISEAYCLFDNEELWIKNMNISSYDKGSFYNHDPLSARKLLLRKAELKKLFMHSKEKGLTIIALRLFTNERGYAKIEIALAKGKKLYDKRESIKSKDNEREMQRIRI</sequence>
<proteinExistence type="inferred from homology"/>
<accession>Q11TP3</accession>
<dbReference type="EMBL" id="CP000383">
    <property type="protein sequence ID" value="ABG59221.1"/>
    <property type="molecule type" value="Genomic_DNA"/>
</dbReference>
<dbReference type="RefSeq" id="WP_011585338.1">
    <property type="nucleotide sequence ID" value="NC_008255.1"/>
</dbReference>
<dbReference type="SMR" id="Q11TP3"/>
<dbReference type="STRING" id="269798.CHU_1955"/>
<dbReference type="KEGG" id="chu:CHU_1955"/>
<dbReference type="eggNOG" id="COG0691">
    <property type="taxonomic scope" value="Bacteria"/>
</dbReference>
<dbReference type="HOGENOM" id="CLU_108953_0_1_10"/>
<dbReference type="OrthoDB" id="9805462at2"/>
<dbReference type="Proteomes" id="UP000001822">
    <property type="component" value="Chromosome"/>
</dbReference>
<dbReference type="GO" id="GO:0005829">
    <property type="term" value="C:cytosol"/>
    <property type="evidence" value="ECO:0007669"/>
    <property type="project" value="TreeGrafter"/>
</dbReference>
<dbReference type="GO" id="GO:0003723">
    <property type="term" value="F:RNA binding"/>
    <property type="evidence" value="ECO:0007669"/>
    <property type="project" value="UniProtKB-UniRule"/>
</dbReference>
<dbReference type="GO" id="GO:0070929">
    <property type="term" value="P:trans-translation"/>
    <property type="evidence" value="ECO:0007669"/>
    <property type="project" value="UniProtKB-UniRule"/>
</dbReference>
<dbReference type="CDD" id="cd09294">
    <property type="entry name" value="SmpB"/>
    <property type="match status" value="1"/>
</dbReference>
<dbReference type="Gene3D" id="2.40.280.10">
    <property type="match status" value="1"/>
</dbReference>
<dbReference type="HAMAP" id="MF_00023">
    <property type="entry name" value="SmpB"/>
    <property type="match status" value="1"/>
</dbReference>
<dbReference type="InterPro" id="IPR023620">
    <property type="entry name" value="SmpB"/>
</dbReference>
<dbReference type="InterPro" id="IPR000037">
    <property type="entry name" value="SsrA-bd_prot"/>
</dbReference>
<dbReference type="InterPro" id="IPR020081">
    <property type="entry name" value="SsrA-bd_prot_CS"/>
</dbReference>
<dbReference type="NCBIfam" id="NF003843">
    <property type="entry name" value="PRK05422.1"/>
    <property type="match status" value="1"/>
</dbReference>
<dbReference type="NCBIfam" id="TIGR00086">
    <property type="entry name" value="smpB"/>
    <property type="match status" value="1"/>
</dbReference>
<dbReference type="PANTHER" id="PTHR30308:SF2">
    <property type="entry name" value="SSRA-BINDING PROTEIN"/>
    <property type="match status" value="1"/>
</dbReference>
<dbReference type="PANTHER" id="PTHR30308">
    <property type="entry name" value="TMRNA-BINDING COMPONENT OF TRANS-TRANSLATION TAGGING COMPLEX"/>
    <property type="match status" value="1"/>
</dbReference>
<dbReference type="Pfam" id="PF01668">
    <property type="entry name" value="SmpB"/>
    <property type="match status" value="1"/>
</dbReference>
<dbReference type="SUPFAM" id="SSF74982">
    <property type="entry name" value="Small protein B (SmpB)"/>
    <property type="match status" value="1"/>
</dbReference>
<dbReference type="PROSITE" id="PS01317">
    <property type="entry name" value="SSRP"/>
    <property type="match status" value="1"/>
</dbReference>
<keyword id="KW-0963">Cytoplasm</keyword>
<keyword id="KW-1185">Reference proteome</keyword>
<keyword id="KW-0694">RNA-binding</keyword>
<reference key="1">
    <citation type="journal article" date="2007" name="Appl. Environ. Microbiol.">
        <title>Genome sequence of the cellulolytic gliding bacterium Cytophaga hutchinsonii.</title>
        <authorList>
            <person name="Xie G."/>
            <person name="Bruce D.C."/>
            <person name="Challacombe J.F."/>
            <person name="Chertkov O."/>
            <person name="Detter J.C."/>
            <person name="Gilna P."/>
            <person name="Han C.S."/>
            <person name="Lucas S."/>
            <person name="Misra M."/>
            <person name="Myers G.L."/>
            <person name="Richardson P."/>
            <person name="Tapia R."/>
            <person name="Thayer N."/>
            <person name="Thompson L.S."/>
            <person name="Brettin T.S."/>
            <person name="Henrissat B."/>
            <person name="Wilson D.B."/>
            <person name="McBride M.J."/>
        </authorList>
    </citation>
    <scope>NUCLEOTIDE SEQUENCE [LARGE SCALE GENOMIC DNA]</scope>
    <source>
        <strain>ATCC 33406 / DSM 1761 / JCM 20678 / CIP 103989 / IAM 12607 / NBRC 15051 / NCIMB 9469 / D465</strain>
    </source>
</reference>
<comment type="function">
    <text evidence="1">Required for rescue of stalled ribosomes mediated by trans-translation. Binds to transfer-messenger RNA (tmRNA), required for stable association of tmRNA with ribosomes. tmRNA and SmpB together mimic tRNA shape, replacing the anticodon stem-loop with SmpB. tmRNA is encoded by the ssrA gene; the 2 termini fold to resemble tRNA(Ala) and it encodes a 'tag peptide', a short internal open reading frame. During trans-translation Ala-aminoacylated tmRNA acts like a tRNA, entering the A-site of stalled ribosomes, displacing the stalled mRNA. The ribosome then switches to translate the ORF on the tmRNA; the nascent peptide is terminated with the 'tag peptide' encoded by the tmRNA and targeted for degradation. The ribosome is freed to recommence translation, which seems to be the essential function of trans-translation.</text>
</comment>
<comment type="subcellular location">
    <subcellularLocation>
        <location evidence="1">Cytoplasm</location>
    </subcellularLocation>
    <text evidence="1">The tmRNA-SmpB complex associates with stalled 70S ribosomes.</text>
</comment>
<comment type="similarity">
    <text evidence="1">Belongs to the SmpB family.</text>
</comment>
<gene>
    <name evidence="1" type="primary">smpB</name>
    <name type="ordered locus">CHU_1955</name>
</gene>
<name>SSRP_CYTH3</name>